<evidence type="ECO:0000255" key="1">
    <source>
        <dbReference type="HAMAP-Rule" id="MF_01310"/>
    </source>
</evidence>
<evidence type="ECO:0000305" key="2"/>
<organism>
    <name type="scientific">Shewanella baltica (strain OS223)</name>
    <dbReference type="NCBI Taxonomy" id="407976"/>
    <lineage>
        <taxon>Bacteria</taxon>
        <taxon>Pseudomonadati</taxon>
        <taxon>Pseudomonadota</taxon>
        <taxon>Gammaproteobacteria</taxon>
        <taxon>Alteromonadales</taxon>
        <taxon>Shewanellaceae</taxon>
        <taxon>Shewanella</taxon>
    </lineage>
</organism>
<name>RS11_SHEB2</name>
<protein>
    <recommendedName>
        <fullName evidence="1">Small ribosomal subunit protein uS11</fullName>
    </recommendedName>
    <alternativeName>
        <fullName evidence="2">30S ribosomal protein S11</fullName>
    </alternativeName>
</protein>
<keyword id="KW-0687">Ribonucleoprotein</keyword>
<keyword id="KW-0689">Ribosomal protein</keyword>
<keyword id="KW-0694">RNA-binding</keyword>
<keyword id="KW-0699">rRNA-binding</keyword>
<gene>
    <name evidence="1" type="primary">rpsK</name>
    <name type="ordered locus">Sbal223_4033</name>
</gene>
<proteinExistence type="inferred from homology"/>
<dbReference type="EMBL" id="CP001252">
    <property type="protein sequence ID" value="ACK48506.1"/>
    <property type="molecule type" value="Genomic_DNA"/>
</dbReference>
<dbReference type="RefSeq" id="WP_006083577.1">
    <property type="nucleotide sequence ID" value="NC_011663.1"/>
</dbReference>
<dbReference type="SMR" id="B8EBI2"/>
<dbReference type="GeneID" id="94726209"/>
<dbReference type="KEGG" id="sbp:Sbal223_4033"/>
<dbReference type="HOGENOM" id="CLU_072439_5_0_6"/>
<dbReference type="Proteomes" id="UP000002507">
    <property type="component" value="Chromosome"/>
</dbReference>
<dbReference type="GO" id="GO:1990904">
    <property type="term" value="C:ribonucleoprotein complex"/>
    <property type="evidence" value="ECO:0007669"/>
    <property type="project" value="UniProtKB-KW"/>
</dbReference>
<dbReference type="GO" id="GO:0005840">
    <property type="term" value="C:ribosome"/>
    <property type="evidence" value="ECO:0007669"/>
    <property type="project" value="UniProtKB-KW"/>
</dbReference>
<dbReference type="GO" id="GO:0019843">
    <property type="term" value="F:rRNA binding"/>
    <property type="evidence" value="ECO:0007669"/>
    <property type="project" value="UniProtKB-UniRule"/>
</dbReference>
<dbReference type="GO" id="GO:0003735">
    <property type="term" value="F:structural constituent of ribosome"/>
    <property type="evidence" value="ECO:0007669"/>
    <property type="project" value="InterPro"/>
</dbReference>
<dbReference type="GO" id="GO:0006412">
    <property type="term" value="P:translation"/>
    <property type="evidence" value="ECO:0007669"/>
    <property type="project" value="UniProtKB-UniRule"/>
</dbReference>
<dbReference type="FunFam" id="3.30.420.80:FF:000001">
    <property type="entry name" value="30S ribosomal protein S11"/>
    <property type="match status" value="1"/>
</dbReference>
<dbReference type="Gene3D" id="3.30.420.80">
    <property type="entry name" value="Ribosomal protein S11"/>
    <property type="match status" value="1"/>
</dbReference>
<dbReference type="HAMAP" id="MF_01310">
    <property type="entry name" value="Ribosomal_uS11"/>
    <property type="match status" value="1"/>
</dbReference>
<dbReference type="InterPro" id="IPR001971">
    <property type="entry name" value="Ribosomal_uS11"/>
</dbReference>
<dbReference type="InterPro" id="IPR019981">
    <property type="entry name" value="Ribosomal_uS11_bac-type"/>
</dbReference>
<dbReference type="InterPro" id="IPR018102">
    <property type="entry name" value="Ribosomal_uS11_CS"/>
</dbReference>
<dbReference type="InterPro" id="IPR036967">
    <property type="entry name" value="Ribosomal_uS11_sf"/>
</dbReference>
<dbReference type="NCBIfam" id="NF003698">
    <property type="entry name" value="PRK05309.1"/>
    <property type="match status" value="1"/>
</dbReference>
<dbReference type="NCBIfam" id="TIGR03632">
    <property type="entry name" value="uS11_bact"/>
    <property type="match status" value="1"/>
</dbReference>
<dbReference type="PANTHER" id="PTHR11759">
    <property type="entry name" value="40S RIBOSOMAL PROTEIN S14/30S RIBOSOMAL PROTEIN S11"/>
    <property type="match status" value="1"/>
</dbReference>
<dbReference type="Pfam" id="PF00411">
    <property type="entry name" value="Ribosomal_S11"/>
    <property type="match status" value="1"/>
</dbReference>
<dbReference type="PIRSF" id="PIRSF002131">
    <property type="entry name" value="Ribosomal_S11"/>
    <property type="match status" value="1"/>
</dbReference>
<dbReference type="SUPFAM" id="SSF53137">
    <property type="entry name" value="Translational machinery components"/>
    <property type="match status" value="1"/>
</dbReference>
<dbReference type="PROSITE" id="PS00054">
    <property type="entry name" value="RIBOSOMAL_S11"/>
    <property type="match status" value="1"/>
</dbReference>
<feature type="chain" id="PRO_1000165566" description="Small ribosomal subunit protein uS11">
    <location>
        <begin position="1"/>
        <end position="130"/>
    </location>
</feature>
<reference key="1">
    <citation type="submission" date="2008-12" db="EMBL/GenBank/DDBJ databases">
        <title>Complete sequence of chromosome of Shewanella baltica OS223.</title>
        <authorList>
            <consortium name="US DOE Joint Genome Institute"/>
            <person name="Lucas S."/>
            <person name="Copeland A."/>
            <person name="Lapidus A."/>
            <person name="Glavina del Rio T."/>
            <person name="Dalin E."/>
            <person name="Tice H."/>
            <person name="Bruce D."/>
            <person name="Goodwin L."/>
            <person name="Pitluck S."/>
            <person name="Chertkov O."/>
            <person name="Meincke L."/>
            <person name="Brettin T."/>
            <person name="Detter J.C."/>
            <person name="Han C."/>
            <person name="Kuske C.R."/>
            <person name="Larimer F."/>
            <person name="Land M."/>
            <person name="Hauser L."/>
            <person name="Kyrpides N."/>
            <person name="Ovchinnikova G."/>
            <person name="Brettar I."/>
            <person name="Rodrigues J."/>
            <person name="Konstantinidis K."/>
            <person name="Tiedje J."/>
        </authorList>
    </citation>
    <scope>NUCLEOTIDE SEQUENCE [LARGE SCALE GENOMIC DNA]</scope>
    <source>
        <strain>OS223</strain>
    </source>
</reference>
<comment type="function">
    <text evidence="1">Located on the platform of the 30S subunit, it bridges several disparate RNA helices of the 16S rRNA. Forms part of the Shine-Dalgarno cleft in the 70S ribosome.</text>
</comment>
<comment type="subunit">
    <text evidence="1">Part of the 30S ribosomal subunit. Interacts with proteins S7 and S18. Binds to IF-3.</text>
</comment>
<comment type="similarity">
    <text evidence="1">Belongs to the universal ribosomal protein uS11 family.</text>
</comment>
<sequence length="130" mass="13892">MAKVPSRSPRKRVRKQVADGMAHIHASFNNTIVTITDRQGNALSWATSGGSGFRGSRKSTPFAAQVAAERAGAAAQDYGLKNLEVFVKGPGPGRESAIRALNAVGYKITNITDVTPIPHNGCRPPKKRRV</sequence>
<accession>B8EBI2</accession>